<proteinExistence type="inferred from homology"/>
<gene>
    <name evidence="1" type="primary">argC</name>
    <name type="ordered locus">ASA_0578</name>
</gene>
<sequence>MLNTVIVGASGYAGAELAALVQNHPQLKLFGLYVSAGSQDAHKRFSSLHPQWVGALDQPLLPLDEDGMTRILTQADLVLLATAHEVSAELAPKFLAKGLPVFDLSGAFRVKDQQFYSSFYGFTHENEQLLEQAAYGLAEWNSDAIAAAQLIAVPGCYPTASLCALKPLQQAGLIAEGWQPIINAVSGVSGAGRKAAINTSFCEVSLSPYGTFNHRHQPEISHHLGKEVLFQPHLGNYVRGILATIYVQMADGVTPTQVDQAFLKAYEGKPLVRLTGQMPSIRGVASTPYCDIAWQQQGNMLVVVSAIDNLLKGAASQAMQCINIKFGFDPATGLI</sequence>
<reference key="1">
    <citation type="journal article" date="2008" name="BMC Genomics">
        <title>The genome of Aeromonas salmonicida subsp. salmonicida A449: insights into the evolution of a fish pathogen.</title>
        <authorList>
            <person name="Reith M.E."/>
            <person name="Singh R.K."/>
            <person name="Curtis B."/>
            <person name="Boyd J.M."/>
            <person name="Bouevitch A."/>
            <person name="Kimball J."/>
            <person name="Munholland J."/>
            <person name="Murphy C."/>
            <person name="Sarty D."/>
            <person name="Williams J."/>
            <person name="Nash J.H."/>
            <person name="Johnson S.C."/>
            <person name="Brown L.L."/>
        </authorList>
    </citation>
    <scope>NUCLEOTIDE SEQUENCE [LARGE SCALE GENOMIC DNA]</scope>
    <source>
        <strain>A449</strain>
    </source>
</reference>
<evidence type="ECO:0000255" key="1">
    <source>
        <dbReference type="HAMAP-Rule" id="MF_00150"/>
    </source>
</evidence>
<dbReference type="EC" id="1.2.1.38" evidence="1"/>
<dbReference type="EMBL" id="CP000644">
    <property type="protein sequence ID" value="ABO88744.1"/>
    <property type="molecule type" value="Genomic_DNA"/>
</dbReference>
<dbReference type="RefSeq" id="WP_005313768.1">
    <property type="nucleotide sequence ID" value="NC_009348.1"/>
</dbReference>
<dbReference type="SMR" id="A4SIM2"/>
<dbReference type="STRING" id="29491.GCA_000820065_01921"/>
<dbReference type="KEGG" id="asa:ASA_0578"/>
<dbReference type="PATRIC" id="fig|382245.13.peg.583"/>
<dbReference type="eggNOG" id="COG0002">
    <property type="taxonomic scope" value="Bacteria"/>
</dbReference>
<dbReference type="HOGENOM" id="CLU_006384_0_1_6"/>
<dbReference type="UniPathway" id="UPA00068">
    <property type="reaction ID" value="UER00108"/>
</dbReference>
<dbReference type="Proteomes" id="UP000000225">
    <property type="component" value="Chromosome"/>
</dbReference>
<dbReference type="GO" id="GO:0005737">
    <property type="term" value="C:cytoplasm"/>
    <property type="evidence" value="ECO:0007669"/>
    <property type="project" value="UniProtKB-SubCell"/>
</dbReference>
<dbReference type="GO" id="GO:0003942">
    <property type="term" value="F:N-acetyl-gamma-glutamyl-phosphate reductase activity"/>
    <property type="evidence" value="ECO:0007669"/>
    <property type="project" value="UniProtKB-UniRule"/>
</dbReference>
<dbReference type="GO" id="GO:0051287">
    <property type="term" value="F:NAD binding"/>
    <property type="evidence" value="ECO:0007669"/>
    <property type="project" value="InterPro"/>
</dbReference>
<dbReference type="GO" id="GO:0070401">
    <property type="term" value="F:NADP+ binding"/>
    <property type="evidence" value="ECO:0007669"/>
    <property type="project" value="InterPro"/>
</dbReference>
<dbReference type="GO" id="GO:0006526">
    <property type="term" value="P:L-arginine biosynthetic process"/>
    <property type="evidence" value="ECO:0007669"/>
    <property type="project" value="UniProtKB-UniRule"/>
</dbReference>
<dbReference type="CDD" id="cd23934">
    <property type="entry name" value="AGPR_1_C"/>
    <property type="match status" value="1"/>
</dbReference>
<dbReference type="CDD" id="cd17895">
    <property type="entry name" value="AGPR_1_N"/>
    <property type="match status" value="1"/>
</dbReference>
<dbReference type="FunFam" id="3.30.360.10:FF:000014">
    <property type="entry name" value="N-acetyl-gamma-glutamyl-phosphate reductase"/>
    <property type="match status" value="1"/>
</dbReference>
<dbReference type="Gene3D" id="3.30.360.10">
    <property type="entry name" value="Dihydrodipicolinate Reductase, domain 2"/>
    <property type="match status" value="1"/>
</dbReference>
<dbReference type="Gene3D" id="3.40.50.720">
    <property type="entry name" value="NAD(P)-binding Rossmann-like Domain"/>
    <property type="match status" value="1"/>
</dbReference>
<dbReference type="HAMAP" id="MF_00150">
    <property type="entry name" value="ArgC_type1"/>
    <property type="match status" value="1"/>
</dbReference>
<dbReference type="InterPro" id="IPR023013">
    <property type="entry name" value="AGPR_AS"/>
</dbReference>
<dbReference type="InterPro" id="IPR000706">
    <property type="entry name" value="AGPR_type-1"/>
</dbReference>
<dbReference type="InterPro" id="IPR036291">
    <property type="entry name" value="NAD(P)-bd_dom_sf"/>
</dbReference>
<dbReference type="InterPro" id="IPR050085">
    <property type="entry name" value="NAGSA_dehydrogenase"/>
</dbReference>
<dbReference type="InterPro" id="IPR000534">
    <property type="entry name" value="Semialdehyde_DH_NAD-bd"/>
</dbReference>
<dbReference type="NCBIfam" id="TIGR01850">
    <property type="entry name" value="argC"/>
    <property type="match status" value="1"/>
</dbReference>
<dbReference type="PANTHER" id="PTHR32338:SF10">
    <property type="entry name" value="N-ACETYL-GAMMA-GLUTAMYL-PHOSPHATE REDUCTASE, CHLOROPLASTIC-RELATED"/>
    <property type="match status" value="1"/>
</dbReference>
<dbReference type="PANTHER" id="PTHR32338">
    <property type="entry name" value="N-ACETYL-GAMMA-GLUTAMYL-PHOSPHATE REDUCTASE, CHLOROPLASTIC-RELATED-RELATED"/>
    <property type="match status" value="1"/>
</dbReference>
<dbReference type="Pfam" id="PF01118">
    <property type="entry name" value="Semialdhyde_dh"/>
    <property type="match status" value="1"/>
</dbReference>
<dbReference type="Pfam" id="PF22698">
    <property type="entry name" value="Semialdhyde_dhC_1"/>
    <property type="match status" value="1"/>
</dbReference>
<dbReference type="SMART" id="SM00859">
    <property type="entry name" value="Semialdhyde_dh"/>
    <property type="match status" value="1"/>
</dbReference>
<dbReference type="SUPFAM" id="SSF55347">
    <property type="entry name" value="Glyceraldehyde-3-phosphate dehydrogenase-like, C-terminal domain"/>
    <property type="match status" value="1"/>
</dbReference>
<dbReference type="SUPFAM" id="SSF51735">
    <property type="entry name" value="NAD(P)-binding Rossmann-fold domains"/>
    <property type="match status" value="1"/>
</dbReference>
<dbReference type="PROSITE" id="PS01224">
    <property type="entry name" value="ARGC"/>
    <property type="match status" value="1"/>
</dbReference>
<name>ARGC_AERS4</name>
<protein>
    <recommendedName>
        <fullName evidence="1">N-acetyl-gamma-glutamyl-phosphate reductase</fullName>
        <shortName evidence="1">AGPR</shortName>
        <ecNumber evidence="1">1.2.1.38</ecNumber>
    </recommendedName>
    <alternativeName>
        <fullName evidence="1">N-acetyl-glutamate semialdehyde dehydrogenase</fullName>
        <shortName evidence="1">NAGSA dehydrogenase</shortName>
    </alternativeName>
</protein>
<comment type="function">
    <text evidence="1">Catalyzes the NADPH-dependent reduction of N-acetyl-5-glutamyl phosphate to yield N-acetyl-L-glutamate 5-semialdehyde.</text>
</comment>
<comment type="catalytic activity">
    <reaction evidence="1">
        <text>N-acetyl-L-glutamate 5-semialdehyde + phosphate + NADP(+) = N-acetyl-L-glutamyl 5-phosphate + NADPH + H(+)</text>
        <dbReference type="Rhea" id="RHEA:21588"/>
        <dbReference type="ChEBI" id="CHEBI:15378"/>
        <dbReference type="ChEBI" id="CHEBI:29123"/>
        <dbReference type="ChEBI" id="CHEBI:43474"/>
        <dbReference type="ChEBI" id="CHEBI:57783"/>
        <dbReference type="ChEBI" id="CHEBI:57936"/>
        <dbReference type="ChEBI" id="CHEBI:58349"/>
        <dbReference type="EC" id="1.2.1.38"/>
    </reaction>
</comment>
<comment type="pathway">
    <text evidence="1">Amino-acid biosynthesis; L-arginine biosynthesis; N(2)-acetyl-L-ornithine from L-glutamate: step 3/4.</text>
</comment>
<comment type="subcellular location">
    <subcellularLocation>
        <location evidence="1">Cytoplasm</location>
    </subcellularLocation>
</comment>
<comment type="similarity">
    <text evidence="1">Belongs to the NAGSA dehydrogenase family. Type 1 subfamily.</text>
</comment>
<organism>
    <name type="scientific">Aeromonas salmonicida (strain A449)</name>
    <dbReference type="NCBI Taxonomy" id="382245"/>
    <lineage>
        <taxon>Bacteria</taxon>
        <taxon>Pseudomonadati</taxon>
        <taxon>Pseudomonadota</taxon>
        <taxon>Gammaproteobacteria</taxon>
        <taxon>Aeromonadales</taxon>
        <taxon>Aeromonadaceae</taxon>
        <taxon>Aeromonas</taxon>
    </lineage>
</organism>
<keyword id="KW-0028">Amino-acid biosynthesis</keyword>
<keyword id="KW-0055">Arginine biosynthesis</keyword>
<keyword id="KW-0963">Cytoplasm</keyword>
<keyword id="KW-0521">NADP</keyword>
<keyword id="KW-0560">Oxidoreductase</keyword>
<feature type="chain" id="PRO_1000010972" description="N-acetyl-gamma-glutamyl-phosphate reductase">
    <location>
        <begin position="1"/>
        <end position="335"/>
    </location>
</feature>
<feature type="active site" evidence="1">
    <location>
        <position position="156"/>
    </location>
</feature>
<accession>A4SIM2</accession>